<gene>
    <name evidence="11" type="primary">Trim28</name>
    <name type="synonym">Kap1</name>
    <name type="synonym">Tif1b</name>
</gene>
<accession>O08629</accession>
<accession>B2RYN5</accession>
<evidence type="ECO:0000250" key="1"/>
<evidence type="ECO:0000250" key="2">
    <source>
        <dbReference type="UniProtKB" id="Q13263"/>
    </source>
</evidence>
<evidence type="ECO:0000250" key="3">
    <source>
        <dbReference type="UniProtKB" id="Q62318"/>
    </source>
</evidence>
<evidence type="ECO:0000255" key="4">
    <source>
        <dbReference type="PROSITE-ProRule" id="PRU00024"/>
    </source>
</evidence>
<evidence type="ECO:0000255" key="5">
    <source>
        <dbReference type="PROSITE-ProRule" id="PRU00035"/>
    </source>
</evidence>
<evidence type="ECO:0000255" key="6">
    <source>
        <dbReference type="PROSITE-ProRule" id="PRU00146"/>
    </source>
</evidence>
<evidence type="ECO:0000255" key="7">
    <source>
        <dbReference type="PROSITE-ProRule" id="PRU00175"/>
    </source>
</evidence>
<evidence type="ECO:0000256" key="8">
    <source>
        <dbReference type="SAM" id="MobiDB-lite"/>
    </source>
</evidence>
<evidence type="ECO:0000269" key="9">
    <source>
    </source>
</evidence>
<evidence type="ECO:0000305" key="10"/>
<evidence type="ECO:0000312" key="11">
    <source>
        <dbReference type="RGD" id="620289"/>
    </source>
</evidence>
<evidence type="ECO:0007744" key="12">
    <source>
    </source>
</evidence>
<keyword id="KW-0007">Acetylation</keyword>
<keyword id="KW-0013">ADP-ribosylation</keyword>
<keyword id="KW-0103">Bromodomain</keyword>
<keyword id="KW-0156">Chromatin regulator</keyword>
<keyword id="KW-0164">Citrullination</keyword>
<keyword id="KW-0175">Coiled coil</keyword>
<keyword id="KW-1017">Isopeptide bond</keyword>
<keyword id="KW-0479">Metal-binding</keyword>
<keyword id="KW-0539">Nucleus</keyword>
<keyword id="KW-0597">Phosphoprotein</keyword>
<keyword id="KW-1185">Reference proteome</keyword>
<keyword id="KW-0677">Repeat</keyword>
<keyword id="KW-0678">Repressor</keyword>
<keyword id="KW-0804">Transcription</keyword>
<keyword id="KW-0805">Transcription regulation</keyword>
<keyword id="KW-0808">Transferase</keyword>
<keyword id="KW-0832">Ubl conjugation</keyword>
<keyword id="KW-0833">Ubl conjugation pathway</keyword>
<keyword id="KW-0862">Zinc</keyword>
<keyword id="KW-0863">Zinc-finger</keyword>
<organism>
    <name type="scientific">Rattus norvegicus</name>
    <name type="common">Rat</name>
    <dbReference type="NCBI Taxonomy" id="10116"/>
    <lineage>
        <taxon>Eukaryota</taxon>
        <taxon>Metazoa</taxon>
        <taxon>Chordata</taxon>
        <taxon>Craniata</taxon>
        <taxon>Vertebrata</taxon>
        <taxon>Euteleostomi</taxon>
        <taxon>Mammalia</taxon>
        <taxon>Eutheria</taxon>
        <taxon>Euarchontoglires</taxon>
        <taxon>Glires</taxon>
        <taxon>Rodentia</taxon>
        <taxon>Myomorpha</taxon>
        <taxon>Muroidea</taxon>
        <taxon>Muridae</taxon>
        <taxon>Murinae</taxon>
        <taxon>Rattus</taxon>
    </lineage>
</organism>
<protein>
    <recommendedName>
        <fullName evidence="10">Transcription intermediary factor 1-beta</fullName>
        <shortName>TIF1-beta</shortName>
    </recommendedName>
    <alternativeName>
        <fullName>E3 SUMO-protein ligase TRIM28</fullName>
        <ecNumber>2.3.2.27</ecNumber>
    </alternativeName>
    <alternativeName>
        <fullName>KRAB-associated protein 1</fullName>
    </alternativeName>
    <alternativeName>
        <fullName>Nuclear corepressor KAP-1</fullName>
    </alternativeName>
    <alternativeName>
        <fullName evidence="10">RING-type E3 ubiquitin transferase TIF1-beta</fullName>
    </alternativeName>
    <alternativeName>
        <fullName>Tripartite motif-containing protein 28</fullName>
    </alternativeName>
</protein>
<sequence>MAASAAAATAAASAATAASAASGSPGSGEGSAGGEKRPAASSAAAASASASSPAGGGGEAQELLEHCGVCRERLRPERDPRLLPCLHSACSACLGPATPAAANNSGDGGSAGDGAMVDCPVCKQQCYSKDIVENYFMRDSGSKASSDSQDANQCCTSCEDNAPATSYCVECSEPLCETCVEAHQRVKYTKDHTVRSTGPAKTRDGERTVYCNVHKHEPLVLFCESCDTLTCRDCQLNAHKDHQYQFLEDAVRNQRKLLASLVKRLGDKHATLQKNTKEVRSSIRQVSDVQKRVQVDVKMAILQIMKELNKRGRVLVNDAQKVTEGQQERLERQHWTMTKIQKHQEHILRFASWALESDNNTALLLSKKLIYFQLHRALKMIVDPVEPHGEMKFQWDLNAWTKSAEAFGKIVAERPGTNSTGPGPMAPPRAPGPLSKQGSGSSQPMEVQEGYGFGTDDPYSSAEPHVSGMKRSRSGEGEVSGLMRKVPRVSLERLDLDLTSDSQPPVFKVFPGSTTEDYNLIVIERGAAAAAAGQAGTVPPGAPGAPPLPGMAIVKEEETEAAIGAPPAAPEGPETKPVLMALTEGPGAEGPRLASPSGSTSSGLEVVAPEVTSAPVSGPGILDDSATICRVCQKPGDLVMCNQCEFCFHLDCHLPSLQDVPGEEWSCSLCHVLPDLKEEDGSLSLDGADSTGVVAKLSPANQRKCERVLLALFCHEPCRPLHQLATDSTFSMEQPGGTLDLTLIRARLQEKLSPPYSSPQEFAQDVGRMFKQFNKLTEDKADVQSIIGLQRFFETRMNDAFGDTKFSAVLVEPPPLNLPSAGLSSQELSGPGDGP</sequence>
<dbReference type="EC" id="2.3.2.27"/>
<dbReference type="EMBL" id="BC166843">
    <property type="protein sequence ID" value="AAI66843.1"/>
    <property type="molecule type" value="mRNA"/>
</dbReference>
<dbReference type="EMBL" id="U95041">
    <property type="protein sequence ID" value="AAB51518.1"/>
    <property type="molecule type" value="mRNA"/>
</dbReference>
<dbReference type="RefSeq" id="NP_446368.1">
    <property type="nucleotide sequence ID" value="NM_053916.1"/>
</dbReference>
<dbReference type="BMRB" id="O08629"/>
<dbReference type="SMR" id="O08629"/>
<dbReference type="BioGRID" id="250580">
    <property type="interactions" value="5"/>
</dbReference>
<dbReference type="FunCoup" id="O08629">
    <property type="interactions" value="3016"/>
</dbReference>
<dbReference type="IntAct" id="O08629">
    <property type="interactions" value="4"/>
</dbReference>
<dbReference type="STRING" id="10116.ENSRNOP00000031061"/>
<dbReference type="iPTMnet" id="O08629"/>
<dbReference type="PhosphoSitePlus" id="O08629"/>
<dbReference type="jPOST" id="O08629"/>
<dbReference type="PaxDb" id="10116-ENSRNOP00000031061"/>
<dbReference type="Ensembl" id="ENSRNOT00000029996.3">
    <property type="protein sequence ID" value="ENSRNOP00000031061.2"/>
    <property type="gene ID" value="ENSRNOG00000027487.3"/>
</dbReference>
<dbReference type="GeneID" id="116698"/>
<dbReference type="KEGG" id="rno:116698"/>
<dbReference type="UCSC" id="RGD:620289">
    <property type="organism name" value="rat"/>
</dbReference>
<dbReference type="AGR" id="RGD:620289"/>
<dbReference type="CTD" id="10155"/>
<dbReference type="RGD" id="620289">
    <property type="gene designation" value="Trim28"/>
</dbReference>
<dbReference type="eggNOG" id="KOG2177">
    <property type="taxonomic scope" value="Eukaryota"/>
</dbReference>
<dbReference type="GeneTree" id="ENSGT00940000160527"/>
<dbReference type="HOGENOM" id="CLU_005817_2_0_1"/>
<dbReference type="InParanoid" id="O08629"/>
<dbReference type="OMA" id="DCKDEVP"/>
<dbReference type="OrthoDB" id="1870062at2759"/>
<dbReference type="PhylomeDB" id="O08629"/>
<dbReference type="TreeFam" id="TF106455"/>
<dbReference type="Reactome" id="R-RNO-212436">
    <property type="pathway name" value="Generic Transcription Pathway"/>
</dbReference>
<dbReference type="Reactome" id="R-RNO-9843940">
    <property type="pathway name" value="Regulation of endogenous retroelements by KRAB-ZFP proteins"/>
</dbReference>
<dbReference type="UniPathway" id="UPA00886"/>
<dbReference type="PRO" id="PR:O08629"/>
<dbReference type="Proteomes" id="UP000002494">
    <property type="component" value="Chromosome 1"/>
</dbReference>
<dbReference type="Bgee" id="ENSRNOG00000027487">
    <property type="expression patterns" value="Expressed in testis and 20 other cell types or tissues"/>
</dbReference>
<dbReference type="GO" id="GO:0000785">
    <property type="term" value="C:chromatin"/>
    <property type="evidence" value="ECO:0000266"/>
    <property type="project" value="RGD"/>
</dbReference>
<dbReference type="GO" id="GO:0000791">
    <property type="term" value="C:euchromatin"/>
    <property type="evidence" value="ECO:0000266"/>
    <property type="project" value="RGD"/>
</dbReference>
<dbReference type="GO" id="GO:0000792">
    <property type="term" value="C:heterochromatin"/>
    <property type="evidence" value="ECO:0000266"/>
    <property type="project" value="RGD"/>
</dbReference>
<dbReference type="GO" id="GO:0005654">
    <property type="term" value="C:nucleoplasm"/>
    <property type="evidence" value="ECO:0000266"/>
    <property type="project" value="RGD"/>
</dbReference>
<dbReference type="GO" id="GO:0005634">
    <property type="term" value="C:nucleus"/>
    <property type="evidence" value="ECO:0000250"/>
    <property type="project" value="UniProtKB"/>
</dbReference>
<dbReference type="GO" id="GO:0032991">
    <property type="term" value="C:protein-containing complex"/>
    <property type="evidence" value="ECO:0000266"/>
    <property type="project" value="RGD"/>
</dbReference>
<dbReference type="GO" id="GO:0090575">
    <property type="term" value="C:RNA polymerase II transcription regulator complex"/>
    <property type="evidence" value="ECO:0000250"/>
    <property type="project" value="BHF-UCL"/>
</dbReference>
<dbReference type="GO" id="GO:0003682">
    <property type="term" value="F:chromatin binding"/>
    <property type="evidence" value="ECO:0000266"/>
    <property type="project" value="RGD"/>
</dbReference>
<dbReference type="GO" id="GO:0070087">
    <property type="term" value="F:chromo shadow domain binding"/>
    <property type="evidence" value="ECO:0000266"/>
    <property type="project" value="RGD"/>
</dbReference>
<dbReference type="GO" id="GO:0003677">
    <property type="term" value="F:DNA binding"/>
    <property type="evidence" value="ECO:0000266"/>
    <property type="project" value="RGD"/>
</dbReference>
<dbReference type="GO" id="GO:0035851">
    <property type="term" value="F:Krueppel-associated box domain binding"/>
    <property type="evidence" value="ECO:0000250"/>
    <property type="project" value="UniProtKB"/>
</dbReference>
<dbReference type="GO" id="GO:1990841">
    <property type="term" value="F:promoter-specific chromatin binding"/>
    <property type="evidence" value="ECO:0000250"/>
    <property type="project" value="UniProtKB"/>
</dbReference>
<dbReference type="GO" id="GO:0004672">
    <property type="term" value="F:protein kinase activity"/>
    <property type="evidence" value="ECO:0000266"/>
    <property type="project" value="RGD"/>
</dbReference>
<dbReference type="GO" id="GO:0019789">
    <property type="term" value="F:SUMO transferase activity"/>
    <property type="evidence" value="ECO:0000266"/>
    <property type="project" value="RGD"/>
</dbReference>
<dbReference type="GO" id="GO:0003713">
    <property type="term" value="F:transcription coactivator activity"/>
    <property type="evidence" value="ECO:0000250"/>
    <property type="project" value="UniProtKB"/>
</dbReference>
<dbReference type="GO" id="GO:0003714">
    <property type="term" value="F:transcription corepressor activity"/>
    <property type="evidence" value="ECO:0000266"/>
    <property type="project" value="RGD"/>
</dbReference>
<dbReference type="GO" id="GO:0061630">
    <property type="term" value="F:ubiquitin protein ligase activity"/>
    <property type="evidence" value="ECO:0000266"/>
    <property type="project" value="RGD"/>
</dbReference>
<dbReference type="GO" id="GO:0031625">
    <property type="term" value="F:ubiquitin protein ligase binding"/>
    <property type="evidence" value="ECO:0000266"/>
    <property type="project" value="RGD"/>
</dbReference>
<dbReference type="GO" id="GO:0004842">
    <property type="term" value="F:ubiquitin-protein transferase activity"/>
    <property type="evidence" value="ECO:0000266"/>
    <property type="project" value="RGD"/>
</dbReference>
<dbReference type="GO" id="GO:0008270">
    <property type="term" value="F:zinc ion binding"/>
    <property type="evidence" value="ECO:0000266"/>
    <property type="project" value="RGD"/>
</dbReference>
<dbReference type="GO" id="GO:0006325">
    <property type="term" value="P:chromatin organization"/>
    <property type="evidence" value="ECO:0000318"/>
    <property type="project" value="GO_Central"/>
</dbReference>
<dbReference type="GO" id="GO:0060028">
    <property type="term" value="P:convergent extension involved in axis elongation"/>
    <property type="evidence" value="ECO:0000266"/>
    <property type="project" value="RGD"/>
</dbReference>
<dbReference type="GO" id="GO:0006346">
    <property type="term" value="P:DNA methylation-dependent constitutive heterochromatin formation"/>
    <property type="evidence" value="ECO:0000250"/>
    <property type="project" value="UniProtKB"/>
</dbReference>
<dbReference type="GO" id="GO:0006281">
    <property type="term" value="P:DNA repair"/>
    <property type="evidence" value="ECO:0000266"/>
    <property type="project" value="RGD"/>
</dbReference>
<dbReference type="GO" id="GO:0007566">
    <property type="term" value="P:embryo implantation"/>
    <property type="evidence" value="ECO:0000266"/>
    <property type="project" value="RGD"/>
</dbReference>
<dbReference type="GO" id="GO:0060669">
    <property type="term" value="P:embryonic placenta morphogenesis"/>
    <property type="evidence" value="ECO:0000266"/>
    <property type="project" value="RGD"/>
</dbReference>
<dbReference type="GO" id="GO:0043045">
    <property type="term" value="P:epigenetic programming of gene expression"/>
    <property type="evidence" value="ECO:0000266"/>
    <property type="project" value="RGD"/>
</dbReference>
<dbReference type="GO" id="GO:0001837">
    <property type="term" value="P:epithelial to mesenchymal transition"/>
    <property type="evidence" value="ECO:0000250"/>
    <property type="project" value="HGNC-UCL"/>
</dbReference>
<dbReference type="GO" id="GO:0071514">
    <property type="term" value="P:genomic imprinting"/>
    <property type="evidence" value="ECO:0000266"/>
    <property type="project" value="RGD"/>
</dbReference>
<dbReference type="GO" id="GO:0001701">
    <property type="term" value="P:in utero embryonic development"/>
    <property type="evidence" value="ECO:0000266"/>
    <property type="project" value="RGD"/>
</dbReference>
<dbReference type="GO" id="GO:0045087">
    <property type="term" value="P:innate immune response"/>
    <property type="evidence" value="ECO:0000266"/>
    <property type="project" value="RGD"/>
</dbReference>
<dbReference type="GO" id="GO:0045892">
    <property type="term" value="P:negative regulation of DNA-templated transcription"/>
    <property type="evidence" value="ECO:0000266"/>
    <property type="project" value="RGD"/>
</dbReference>
<dbReference type="GO" id="GO:0045869">
    <property type="term" value="P:negative regulation of single stranded viral RNA replication via double stranded DNA intermediate"/>
    <property type="evidence" value="ECO:0000266"/>
    <property type="project" value="RGD"/>
</dbReference>
<dbReference type="GO" id="GO:0000122">
    <property type="term" value="P:negative regulation of transcription by RNA polymerase II"/>
    <property type="evidence" value="ECO:0000266"/>
    <property type="project" value="RGD"/>
</dbReference>
<dbReference type="GO" id="GO:0045739">
    <property type="term" value="P:positive regulation of DNA repair"/>
    <property type="evidence" value="ECO:0000266"/>
    <property type="project" value="RGD"/>
</dbReference>
<dbReference type="GO" id="GO:0045893">
    <property type="term" value="P:positive regulation of DNA-templated transcription"/>
    <property type="evidence" value="ECO:0000250"/>
    <property type="project" value="HGNC-UCL"/>
</dbReference>
<dbReference type="GO" id="GO:0042307">
    <property type="term" value="P:positive regulation of protein import into nucleus"/>
    <property type="evidence" value="ECO:0000250"/>
    <property type="project" value="UniProtKB"/>
</dbReference>
<dbReference type="GO" id="GO:0043161">
    <property type="term" value="P:proteasome-mediated ubiquitin-dependent protein catabolic process"/>
    <property type="evidence" value="ECO:0000266"/>
    <property type="project" value="RGD"/>
</dbReference>
<dbReference type="GO" id="GO:0016925">
    <property type="term" value="P:protein sumoylation"/>
    <property type="evidence" value="ECO:0000266"/>
    <property type="project" value="RGD"/>
</dbReference>
<dbReference type="GO" id="GO:0044790">
    <property type="term" value="P:suppression of viral release by host"/>
    <property type="evidence" value="ECO:0000266"/>
    <property type="project" value="RGD"/>
</dbReference>
<dbReference type="CDD" id="cd19846">
    <property type="entry name" value="Bbox1_TIF1b_C-VI"/>
    <property type="match status" value="1"/>
</dbReference>
<dbReference type="CDD" id="cd19829">
    <property type="entry name" value="Bbox2_TIF1b_C-VI"/>
    <property type="match status" value="1"/>
</dbReference>
<dbReference type="CDD" id="cd15623">
    <property type="entry name" value="PHD_TIF1beta"/>
    <property type="match status" value="1"/>
</dbReference>
<dbReference type="CDD" id="cd16765">
    <property type="entry name" value="RING-HC_TIF1beta"/>
    <property type="match status" value="1"/>
</dbReference>
<dbReference type="FunFam" id="1.20.920.10:FF:000030">
    <property type="entry name" value="transcription intermediary factor 1-beta"/>
    <property type="match status" value="1"/>
</dbReference>
<dbReference type="FunFam" id="3.30.40.10:FF:000272">
    <property type="entry name" value="transcription intermediary factor 1-beta"/>
    <property type="match status" value="1"/>
</dbReference>
<dbReference type="FunFam" id="3.30.160.60:FF:000074">
    <property type="entry name" value="Tripartite motif containing 66"/>
    <property type="match status" value="1"/>
</dbReference>
<dbReference type="Gene3D" id="1.20.920.10">
    <property type="entry name" value="Bromodomain-like"/>
    <property type="match status" value="1"/>
</dbReference>
<dbReference type="Gene3D" id="3.30.160.60">
    <property type="entry name" value="Classic Zinc Finger"/>
    <property type="match status" value="1"/>
</dbReference>
<dbReference type="Gene3D" id="3.30.40.10">
    <property type="entry name" value="Zinc/RING finger domain, C3HC4 (zinc finger)"/>
    <property type="match status" value="2"/>
</dbReference>
<dbReference type="InterPro" id="IPR003649">
    <property type="entry name" value="Bbox_C"/>
</dbReference>
<dbReference type="InterPro" id="IPR001487">
    <property type="entry name" value="Bromodomain"/>
</dbReference>
<dbReference type="InterPro" id="IPR036427">
    <property type="entry name" value="Bromodomain-like_sf"/>
</dbReference>
<dbReference type="InterPro" id="IPR037373">
    <property type="entry name" value="KAP1"/>
</dbReference>
<dbReference type="InterPro" id="IPR047059">
    <property type="entry name" value="TIF1b_Bbox1_Znf"/>
</dbReference>
<dbReference type="InterPro" id="IPR047058">
    <property type="entry name" value="TIF1b_Bbox2_Znf"/>
</dbReference>
<dbReference type="InterPro" id="IPR042713">
    <property type="entry name" value="TIF1beta_RING-HC"/>
</dbReference>
<dbReference type="InterPro" id="IPR019786">
    <property type="entry name" value="Zinc_finger_PHD-type_CS"/>
</dbReference>
<dbReference type="InterPro" id="IPR000315">
    <property type="entry name" value="Znf_B-box"/>
</dbReference>
<dbReference type="InterPro" id="IPR011011">
    <property type="entry name" value="Znf_FYVE_PHD"/>
</dbReference>
<dbReference type="InterPro" id="IPR001965">
    <property type="entry name" value="Znf_PHD"/>
</dbReference>
<dbReference type="InterPro" id="IPR019787">
    <property type="entry name" value="Znf_PHD-finger"/>
</dbReference>
<dbReference type="InterPro" id="IPR001841">
    <property type="entry name" value="Znf_RING"/>
</dbReference>
<dbReference type="InterPro" id="IPR013083">
    <property type="entry name" value="Znf_RING/FYVE/PHD"/>
</dbReference>
<dbReference type="PANTHER" id="PTHR45915">
    <property type="entry name" value="TRANSCRIPTION INTERMEDIARY FACTOR"/>
    <property type="match status" value="1"/>
</dbReference>
<dbReference type="PANTHER" id="PTHR45915:SF8">
    <property type="entry name" value="TRIPARTITE MOTIF CONTAINING 28"/>
    <property type="match status" value="1"/>
</dbReference>
<dbReference type="Pfam" id="PF00628">
    <property type="entry name" value="PHD"/>
    <property type="match status" value="1"/>
</dbReference>
<dbReference type="Pfam" id="PF00643">
    <property type="entry name" value="zf-B_box"/>
    <property type="match status" value="2"/>
</dbReference>
<dbReference type="Pfam" id="PF14634">
    <property type="entry name" value="zf-RING_5"/>
    <property type="match status" value="1"/>
</dbReference>
<dbReference type="SMART" id="SM00502">
    <property type="entry name" value="BBC"/>
    <property type="match status" value="1"/>
</dbReference>
<dbReference type="SMART" id="SM00336">
    <property type="entry name" value="BBOX"/>
    <property type="match status" value="2"/>
</dbReference>
<dbReference type="SMART" id="SM00297">
    <property type="entry name" value="BROMO"/>
    <property type="match status" value="1"/>
</dbReference>
<dbReference type="SMART" id="SM00249">
    <property type="entry name" value="PHD"/>
    <property type="match status" value="1"/>
</dbReference>
<dbReference type="SMART" id="SM00184">
    <property type="entry name" value="RING"/>
    <property type="match status" value="2"/>
</dbReference>
<dbReference type="SUPFAM" id="SSF57845">
    <property type="entry name" value="B-box zinc-binding domain"/>
    <property type="match status" value="1"/>
</dbReference>
<dbReference type="SUPFAM" id="SSF57903">
    <property type="entry name" value="FYVE/PHD zinc finger"/>
    <property type="match status" value="1"/>
</dbReference>
<dbReference type="SUPFAM" id="SSF57850">
    <property type="entry name" value="RING/U-box"/>
    <property type="match status" value="1"/>
</dbReference>
<dbReference type="PROSITE" id="PS50014">
    <property type="entry name" value="BROMODOMAIN_2"/>
    <property type="match status" value="1"/>
</dbReference>
<dbReference type="PROSITE" id="PS50119">
    <property type="entry name" value="ZF_BBOX"/>
    <property type="match status" value="2"/>
</dbReference>
<dbReference type="PROSITE" id="PS01359">
    <property type="entry name" value="ZF_PHD_1"/>
    <property type="match status" value="1"/>
</dbReference>
<dbReference type="PROSITE" id="PS50016">
    <property type="entry name" value="ZF_PHD_2"/>
    <property type="match status" value="1"/>
</dbReference>
<dbReference type="PROSITE" id="PS50089">
    <property type="entry name" value="ZF_RING_2"/>
    <property type="match status" value="1"/>
</dbReference>
<reference key="1">
    <citation type="journal article" date="2004" name="Genome Res.">
        <title>The status, quality, and expansion of the NIH full-length cDNA project: the Mammalian Gene Collection (MGC).</title>
        <authorList>
            <consortium name="The MGC Project Team"/>
        </authorList>
    </citation>
    <scope>NUCLEOTIDE SEQUENCE [LARGE SCALE MRNA]</scope>
    <source>
        <tissue>Lung</tissue>
    </source>
</reference>
<reference key="2">
    <citation type="submission" date="1997-03" db="EMBL/GenBank/DDBJ databases">
        <authorList>
            <person name="Emison E.S."/>
            <person name="Lewis B.C."/>
            <person name="Shim H."/>
            <person name="Li Q."/>
            <person name="Dang C.V."/>
            <person name="Lee L.A."/>
        </authorList>
    </citation>
    <scope>NUCLEOTIDE SEQUENCE [MRNA] OF 197-281</scope>
</reference>
<reference key="3">
    <citation type="journal article" date="2001" name="Mol. Cell. Biol.">
        <title>Sequence-specific transcriptional repression by KS1, a multiple-zinc-finger-Kruppel-associated box protein.</title>
        <authorList>
            <person name="Gebelein B."/>
            <person name="Urrutia R."/>
        </authorList>
    </citation>
    <scope>INTERACTION WITH ZNF382</scope>
</reference>
<reference key="4">
    <citation type="journal article" date="2012" name="Nat. Commun.">
        <title>Quantitative maps of protein phosphorylation sites across 14 different rat organs and tissues.</title>
        <authorList>
            <person name="Lundby A."/>
            <person name="Secher A."/>
            <person name="Lage K."/>
            <person name="Nordsborg N.B."/>
            <person name="Dmytriyev A."/>
            <person name="Lundby C."/>
            <person name="Olsen J.V."/>
        </authorList>
    </citation>
    <scope>PHOSPHORYLATION [LARGE SCALE ANALYSIS] AT SER-24; SER-27; SER-474; SER-502; SER-684; SER-753 AND SER-758</scope>
    <scope>IDENTIFICATION BY MASS SPECTROMETRY [LARGE SCALE ANALYSIS]</scope>
</reference>
<comment type="function">
    <text evidence="2 3">Nuclear corepressor for KRAB domain-containing zinc finger proteins (KRAB-ZFPs). Mediates gene silencing by recruiting CHD3, a subunit of the nucleosome remodeling and deacetylation (NuRD) complex, and SETDB1 (which specifically methylates histone H3 at 'Lys-9' (H3K9me)) to the promoter regions of KRAB target genes. Enhances transcriptional repression by coordinating the increase in H3K9me, the decrease in histone H3 'Lys-9 and 'Lys-14' acetylation (H3K9ac and H3K14ac, respectively) and the disposition of HP1 proteins to silence gene expression. Recruitment of SETDB1 induces heterochromatinization. May play a role as a coactivator for CEBPB and NR3C1 in the transcriptional activation of ORM1. Also a corepressor for ERBB4. Inhibits E2F1 activity by stimulating E2F1-HDAC1 complex formation and inhibiting E2F1 acetylation. May serve as a partial backup to prevent E2F1-mediated apoptosis in the absence of RB1. Important regulator of CDKN1A/p21(CIP1). Has E3 SUMO-protein ligase activity toward itself via its PHD-type zinc finger. Also specifically sumoylates IRF7, thereby inhibiting its transactivation activity. Ubiquitinates p53/TP53 leading to its proteasomal degradation; the function is enhanced by MAGEC2 and MAGEA2, and possibly MAGEA3 and MAGEA6. Mediates the nuclear localization of KOX1, ZNF268 and ZNF300 transcription factors. In association with isoform 2 of ZFP90, is required for the transcriptional repressor activity of FOXP3 and the suppressive function of regulatory T-cells (Treg). Probably forms a corepressor complex required for activated KRAS-mediated promoter hypermethylation and transcriptional silencing of tumor suppressor genes (TSGs) or other tumor-related genes in colorectal cancer (CRC) cells. Required to maintain a transcriptionally repressive state of genes in undifferentiated embryonic stem cells (ESCs). In ESCs, in collaboration with SETDB1, is also required for H3K9me3 and silencing of endogenous and introduced retroviruses in a DNA-methylation independent-pathway. Associates at promoter regions of tumor suppressor genes (TSGs) leading to their gene silencing. The SETDB1-TRIM28-ZNF274 complex may play a role in recruiting ATRX to the 3'-exons of zinc finger genes with atypical chromatin signatures to establish or maintain/protect H3K9me3 at these transcriptionally active regions.</text>
</comment>
<comment type="catalytic activity">
    <reaction>
        <text>S-ubiquitinyl-[E2 ubiquitin-conjugating enzyme]-L-cysteine + [acceptor protein]-L-lysine = [E2 ubiquitin-conjugating enzyme]-L-cysteine + N(6)-ubiquitinyl-[acceptor protein]-L-lysine.</text>
        <dbReference type="EC" id="2.3.2.27"/>
    </reaction>
</comment>
<comment type="pathway">
    <text>Protein modification; protein sumoylation.</text>
</comment>
<comment type="subunit">
    <text evidence="2 3 9">Interacts with ZNF382 (PubMed:11154279). Interacts with SETX. Oligomer; the RBCC domain homotrimerizes and interacts with one molecule of KRAB to form the KRAB-KAP1 corepressor complex. Binding to a KRAB domain is an absolute requirement for silencing gene expression. Interacts with CEBPB and NR3C1. Interacts with a number of KRAB-ZFP proteins including ZNF10, ZFP53, ZFP68 and ZNF256. Interacts with NCOR1, NR3C1 and CHD3. Interacts with CEBPB (via the RING-type and PHD-type zinc fingers). Component of a ternary complex that includes TRIM28, a HP1 protein (CBX1, CBX3 OR CBX5), a KRAB domain-containing protein, and DNA. Interacts with CBX5 (via the PxVxL motif); the interaction occurs in interphase nuclei and competes for binding POGZ. Interacts with POGZ; the interaction competes for interaction with CBX5. Interacts with SETDB1; the interaction is enhanced by KAP1 sumoylation, stimulates SETDB1 histone methyltransferase activity and gene silencing. Interacts (via the PHD-type zinc finger) with UBE2I; the interaction is required for sumoylation and repressor activity. Component of the TRIM28/KAP1-ERBB4-MDM2 complex involved in connecting growth factor and DNA damage responses. Interacts directly with ERBB4; the interaction represses ERBB4-mediated transcription activity. Interacts with MDM2; the interaction contributes to p53/TP53 inactivation. Component of the TRIM28/KAP1-MDM2-p53/TP53; involved in regulating p53/TP53 stabilization and activity. Interacts (via the leucine zipper alpha helical coiled-coil) with E2F1 (central region); the interaction inhibits E2F1 acetylation and transcriptional activity. Interacts with PPP1CA; the interaction dephosphorylates TRIM28 at Ser-824 and forms a complex at the p21 promoter site. Interacts with PPP1CB; the interaction is weak but is increased on dephosphorylation at Ser-824. Interacts with SMARCAD1. Interacts with, and sumoylates IRF7. Interacts with MAGEC2. Part of a complex composed of TRIM28, HDAC1, HDAC2 and EHMT2. Interacts with AICDA. The large PER complex involved in the histone methylation is composed of at least PER2, CBX3, TRIM28, SUV39H1 and/or SUV39H2; CBX3 mediates the formation of the complex (By similarity). Interacts with NR4A3; the interactions potentiates NR4A3 activity on NurRE promoter (By similarity). Interacts (unphosphorylated or phosphorylated form) with ZBTB1 (via BTB domain) (By similarity). Probably part of a corepressor complex containing ZNF304, TRIM28, SETDB1 and DNMT1. Interacts with ATRX. Forms a complex with ATRX, SETDB1 and ZNF274 (By similarity). Interacts with ZFP568; the interaction mediates ZFP568 transcriptional repression activity (By similarity). Interacts with RRP1B (By similarity). Interacts with CRY1 (By similarity). Interacts with ZNF263; recruited to the SIX3 promoter along with other proteins involved in chromatin modification and transcriptional corepression where it contributes to transcriptional repression (By similarity). Interacts with CYREN (via XLF motif) (By similarity). Interacts with TRIM17; this interaction prevents TRIM28 activity (By similarity). Interacts with ZNF746 (By similarity). Interacts with PHF13 (By similarity). Interacts with ZNF354C (By similarity). Interacts with ZNF432; the interaction is independent of PARP1 (By similarity).</text>
</comment>
<comment type="subcellular location">
    <subcellularLocation>
        <location evidence="3">Nucleus</location>
    </subcellularLocation>
    <text evidence="2 3">Associated with centromeric heterochromatin during cell differentiation through CBX1 (By similarity). Localizes to sites of DNA damage (By similarity).</text>
</comment>
<comment type="domain">
    <text evidence="2">The HP1 box is both necessary and sufficient for HP1 binding.</text>
</comment>
<comment type="domain">
    <text evidence="2">The PHD-type zinc finger enhances CEBPB transcriptional activity. The PHD-type zinc finger, the HP1 box and the bromo domain, function together to assemble the machinery required for repression of KRAB domain-containing proteins. Acts as an intramolecular SUMO E3 ligase for autosumoylation of bromodomain.</text>
</comment>
<comment type="domain">
    <text evidence="2">The RING-finger-B Box-coiled-coil/tripartite motif (RBCC/TRIM motif) is required for interaction with the KRAB domain of KRAB-zinc finger proteins. Binds four zinc ions per molecule. The RING finger and the N-terminal of the leucine zipper alpha helical coiled-coil region of RBCC are required for oligomerization.</text>
</comment>
<comment type="domain">
    <text evidence="2">Contains one Pro-Xaa-Val-Xaa-Leu (PxVxL) motif, which is required for interaction with chromoshadow domains. This motif requires additional residues -7, -6, +4 and +5 of the central Val which contact the chromoshadow domain.</text>
</comment>
<comment type="PTM">
    <text evidence="2">ATM-induced phosphorylation on Ser-825 represses sumoylation leading to the de-repression of expression of a subset of genes involved in cell cycle control and apoptosis in response to genotoxic stress. Dephosphorylation by the phosphatases, PPP1CA and PP1CB forms, allows sumoylation and expression of TRIM28 target genes.</text>
</comment>
<comment type="PTM">
    <text evidence="2">Sumoylation/desumoylation events regulate TRIM28-mediated transcriptional repression. Sumoylation is required for interaction with CHD3 and SETDB1 and the corepressor activity. Represses and is repressed by Ser-824 phosphorylation. Enhances the TRIM28 corepressor activity, inhibiting transcriptional activity of a number of genes including GADD45A and CDKN1A/p21. Lys-555, Lys-780 and Lys-805 are the major sites of sumoylation. In response to Dox-induced DNA damage, enhanced phosphorylation on Ser-825 prevents sumoylation and allows de-repression of CDKN1A/p21.</text>
</comment>
<comment type="PTM">
    <text evidence="2">Auto-ubiquitinated; enhanced by MAGEA2 and MAGEC2.</text>
</comment>
<comment type="PTM">
    <text evidence="3">Citrullinated by PADI4.</text>
</comment>
<comment type="PTM">
    <text evidence="3">ADP-ribosylated by SIRT6, promoting TRIM28/KAP1 interaction with CBX5, thereby contributing to the packaging of LINE-1 retrotransposon elements into transcriptionally repressive heterochromatin.</text>
</comment>
<comment type="similarity">
    <text evidence="10">Belongs to the TRIM/RBCC family.</text>
</comment>
<proteinExistence type="evidence at protein level"/>
<feature type="chain" id="PRO_0000056394" description="Transcription intermediary factor 1-beta">
    <location>
        <begin position="1"/>
        <end position="835"/>
    </location>
</feature>
<feature type="domain" description="Bromo" evidence="5">
    <location>
        <begin position="696"/>
        <end position="800"/>
    </location>
</feature>
<feature type="zinc finger region" description="RING-type" evidence="7">
    <location>
        <begin position="67"/>
        <end position="123"/>
    </location>
</feature>
<feature type="zinc finger region" description="B box-type 1; atypical" evidence="4">
    <location>
        <begin position="150"/>
        <end position="197"/>
    </location>
</feature>
<feature type="zinc finger region" description="B box-type 2" evidence="4">
    <location>
        <begin position="206"/>
        <end position="247"/>
    </location>
</feature>
<feature type="zinc finger region" description="PHD-type" evidence="6">
    <location>
        <begin position="626"/>
        <end position="673"/>
    </location>
</feature>
<feature type="region of interest" description="Disordered" evidence="8">
    <location>
        <begin position="14"/>
        <end position="57"/>
    </location>
</feature>
<feature type="region of interest" description="Leucine zipper alpha helical coiled-coil region" evidence="1">
    <location>
        <begin position="248"/>
        <end position="378"/>
    </location>
</feature>
<feature type="region of interest" description="Interaction with MAGEC2" evidence="1">
    <location>
        <begin position="249"/>
        <end position="378"/>
    </location>
</feature>
<feature type="region of interest" description="Involved in binding PPP1CA" evidence="1">
    <location>
        <begin position="368"/>
        <end position="372"/>
    </location>
</feature>
<feature type="region of interest" description="Disordered" evidence="8">
    <location>
        <begin position="413"/>
        <end position="481"/>
    </location>
</feature>
<feature type="region of interest" description="HP1 box">
    <location>
        <begin position="477"/>
        <end position="514"/>
    </location>
</feature>
<feature type="short sequence motif" description="PxVxL motif">
    <location>
        <begin position="482"/>
        <end position="495"/>
    </location>
</feature>
<feature type="compositionally biased region" description="Low complexity" evidence="8">
    <location>
        <begin position="14"/>
        <end position="24"/>
    </location>
</feature>
<feature type="compositionally biased region" description="Low complexity" evidence="8">
    <location>
        <begin position="39"/>
        <end position="53"/>
    </location>
</feature>
<feature type="compositionally biased region" description="Polar residues" evidence="8">
    <location>
        <begin position="436"/>
        <end position="445"/>
    </location>
</feature>
<feature type="binding site" evidence="4">
    <location>
        <position position="155"/>
    </location>
    <ligand>
        <name>Zn(2+)</name>
        <dbReference type="ChEBI" id="CHEBI:29105"/>
        <label>1</label>
    </ligand>
</feature>
<feature type="binding site" evidence="4">
    <location>
        <position position="158"/>
    </location>
    <ligand>
        <name>Zn(2+)</name>
        <dbReference type="ChEBI" id="CHEBI:29105"/>
        <label>1</label>
    </ligand>
</feature>
<feature type="binding site" evidence="4">
    <location>
        <position position="179"/>
    </location>
    <ligand>
        <name>Zn(2+)</name>
        <dbReference type="ChEBI" id="CHEBI:29105"/>
        <label>1</label>
    </ligand>
</feature>
<feature type="binding site" evidence="4">
    <location>
        <position position="183"/>
    </location>
    <ligand>
        <name>Zn(2+)</name>
        <dbReference type="ChEBI" id="CHEBI:29105"/>
        <label>1</label>
    </ligand>
</feature>
<feature type="binding site" evidence="4">
    <location>
        <position position="211"/>
    </location>
    <ligand>
        <name>Zn(2+)</name>
        <dbReference type="ChEBI" id="CHEBI:29105"/>
        <label>2</label>
    </ligand>
</feature>
<feature type="binding site" evidence="4">
    <location>
        <position position="214"/>
    </location>
    <ligand>
        <name>Zn(2+)</name>
        <dbReference type="ChEBI" id="CHEBI:29105"/>
        <label>2</label>
    </ligand>
</feature>
<feature type="binding site" evidence="4">
    <location>
        <position position="234"/>
    </location>
    <ligand>
        <name>Zn(2+)</name>
        <dbReference type="ChEBI" id="CHEBI:29105"/>
        <label>2</label>
    </ligand>
</feature>
<feature type="binding site" evidence="4">
    <location>
        <position position="239"/>
    </location>
    <ligand>
        <name>Zn(2+)</name>
        <dbReference type="ChEBI" id="CHEBI:29105"/>
        <label>2</label>
    </ligand>
</feature>
<feature type="modified residue" description="Phosphoserine" evidence="12">
    <location>
        <position position="24"/>
    </location>
</feature>
<feature type="modified residue" description="Phosphoserine" evidence="12">
    <location>
        <position position="27"/>
    </location>
</feature>
<feature type="modified residue" description="Phosphoserine" evidence="2">
    <location>
        <position position="31"/>
    </location>
</feature>
<feature type="modified residue" description="Phosphoserine" evidence="2">
    <location>
        <position position="52"/>
    </location>
</feature>
<feature type="modified residue" description="Phosphoserine" evidence="2">
    <location>
        <position position="140"/>
    </location>
</feature>
<feature type="modified residue" description="N6-acetyllysine" evidence="3">
    <location>
        <position position="268"/>
    </location>
</feature>
<feature type="modified residue" description="N6-acetyllysine; alternate" evidence="2">
    <location>
        <position position="306"/>
    </location>
</feature>
<feature type="modified residue" description="N6-acetyllysine" evidence="2">
    <location>
        <position position="342"/>
    </location>
</feature>
<feature type="modified residue" description="N6-acetyllysine; alternate" evidence="2">
    <location>
        <position position="379"/>
    </location>
</feature>
<feature type="modified residue" description="Phosphoserine" evidence="2">
    <location>
        <position position="419"/>
    </location>
</feature>
<feature type="modified residue" description="Phosphoserine" evidence="3">
    <location>
        <position position="439"/>
    </location>
</feature>
<feature type="modified residue" description="Phosphoserine" evidence="2">
    <location>
        <position position="441"/>
    </location>
</feature>
<feature type="modified residue" description="Citrulline" evidence="1">
    <location>
        <position position="471"/>
    </location>
</feature>
<feature type="modified residue" description="Phosphoserine" evidence="2">
    <location>
        <position position="472"/>
    </location>
</feature>
<feature type="modified residue" description="Citrulline" evidence="1">
    <location>
        <position position="473"/>
    </location>
</feature>
<feature type="modified residue" description="Phosphoserine" evidence="12">
    <location>
        <position position="474"/>
    </location>
</feature>
<feature type="modified residue" description="Phosphoserine" evidence="2">
    <location>
        <position position="480"/>
    </location>
</feature>
<feature type="modified residue" description="Phosphoserine" evidence="2">
    <location>
        <position position="490"/>
    </location>
</feature>
<feature type="modified residue" description="Phosphothreonine" evidence="2">
    <location>
        <position position="499"/>
    </location>
</feature>
<feature type="modified residue" description="Phosphoserine" evidence="12">
    <location>
        <position position="502"/>
    </location>
</feature>
<feature type="modified residue" description="Phosphoserine" evidence="2">
    <location>
        <position position="595"/>
    </location>
</feature>
<feature type="modified residue" description="Phosphoserine" evidence="12">
    <location>
        <position position="684"/>
    </location>
</feature>
<feature type="modified residue" description="Phosphoserine" evidence="2">
    <location>
        <position position="690"/>
    </location>
</feature>
<feature type="modified residue" description="Phosphoserine" evidence="2">
    <location>
        <position position="698"/>
    </location>
</feature>
<feature type="modified residue" description="Phosphoserine" evidence="12">
    <location>
        <position position="753"/>
    </location>
</feature>
<feature type="modified residue" description="Phosphotyrosine" evidence="3">
    <location>
        <position position="756"/>
    </location>
</feature>
<feature type="modified residue" description="Phosphoserine" evidence="12">
    <location>
        <position position="758"/>
    </location>
</feature>
<feature type="modified residue" description="N6-acetyllysine; alternate" evidence="2">
    <location>
        <position position="771"/>
    </location>
</feature>
<feature type="modified residue" description="N6-acetyllysine; alternate" evidence="2">
    <location>
        <position position="775"/>
    </location>
</feature>
<feature type="modified residue" description="N6-acetyllysine; alternate" evidence="3">
    <location>
        <position position="780"/>
    </location>
</feature>
<feature type="modified residue" description="Phosphoserine" evidence="2">
    <location>
        <position position="785"/>
    </location>
</feature>
<feature type="modified residue" description="Phosphoserine; by ATM and ATR and dsDNA kinase" evidence="2">
    <location>
        <position position="825"/>
    </location>
</feature>
<feature type="cross-link" description="Glycyl lysine isopeptide (Lys-Gly) (interchain with G-Cter in SUMO2)" evidence="2">
    <location>
        <position position="36"/>
    </location>
</feature>
<feature type="cross-link" description="Glycyl lysine isopeptide (Lys-Gly) (interchain with G-Cter in SUMO2)" evidence="2">
    <location>
        <position position="129"/>
    </location>
</feature>
<feature type="cross-link" description="Glycyl lysine isopeptide (Lys-Gly) (interchain with G-Cter in SUMO2)" evidence="2">
    <location>
        <position position="201"/>
    </location>
</feature>
<feature type="cross-link" description="Glycyl lysine isopeptide (Lys-Gly) (interchain with G-Cter in SUMO2)" evidence="2">
    <location>
        <position position="256"/>
    </location>
</feature>
<feature type="cross-link" description="Glycyl lysine isopeptide (Lys-Gly) (interchain with G-Cter in SUMO2)" evidence="2">
    <location>
        <position position="263"/>
    </location>
</feature>
<feature type="cross-link" description="Glycyl lysine isopeptide (Lys-Gly) (interchain with G-Cter in SUMO2)" evidence="2">
    <location>
        <position position="274"/>
    </location>
</feature>
<feature type="cross-link" description="Glycyl lysine isopeptide (Lys-Gly) (interchain with G-Cter in SUMO2); alternate" evidence="2">
    <location>
        <position position="306"/>
    </location>
</feature>
<feature type="cross-link" description="Glycyl lysine isopeptide (Lys-Gly) (interchain with G-Cter in SUMO2)" evidence="2">
    <location>
        <position position="321"/>
    </location>
</feature>
<feature type="cross-link" description="Glycyl lysine isopeptide (Lys-Gly) (interchain with G-Cter in SUMO2)" evidence="2">
    <location>
        <position position="368"/>
    </location>
</feature>
<feature type="cross-link" description="Glycyl lysine isopeptide (Lys-Gly) (interchain with G-Cter in SUMO1); alternate" evidence="2">
    <location>
        <position position="379"/>
    </location>
</feature>
<feature type="cross-link" description="Glycyl lysine isopeptide (Lys-Gly) (interchain with G-Cter in SUMO2); alternate" evidence="2">
    <location>
        <position position="379"/>
    </location>
</feature>
<feature type="cross-link" description="Glycyl lysine isopeptide (Lys-Gly) (interchain with G-Cter in SUMO2)" evidence="2">
    <location>
        <position position="409"/>
    </location>
</feature>
<feature type="cross-link" description="Glycyl lysine isopeptide (Lys-Gly) (interchain with G-Cter in SUMO2)" evidence="2">
    <location>
        <position position="436"/>
    </location>
</feature>
<feature type="cross-link" description="Glycyl lysine isopeptide (Lys-Gly) (interchain with G-Cter in SUMO1); alternate" evidence="2">
    <location>
        <position position="470"/>
    </location>
</feature>
<feature type="cross-link" description="Glycyl lysine isopeptide (Lys-Gly) (interchain with G-Cter in SUMO2); alternate" evidence="2">
    <location>
        <position position="470"/>
    </location>
</feature>
<feature type="cross-link" description="Glycyl lysine isopeptide (Lys-Gly) (interchain with G-Cter in SUMO2)" evidence="2">
    <location>
        <position position="508"/>
    </location>
</feature>
<feature type="cross-link" description="Glycyl lysine isopeptide (Lys-Gly) (interchain with G-Cter in SUMO); alternate" evidence="2">
    <location>
        <position position="555"/>
    </location>
</feature>
<feature type="cross-link" description="Glycyl lysine isopeptide (Lys-Gly) (interchain with G-Cter in SUMO2); alternate" evidence="2">
    <location>
        <position position="555"/>
    </location>
</feature>
<feature type="cross-link" description="Glycyl lysine isopeptide (Lys-Gly) (interchain with G-Cter in SUMO2)" evidence="2">
    <location>
        <position position="576"/>
    </location>
</feature>
<feature type="cross-link" description="Glycyl lysine isopeptide (Lys-Gly) (interchain with G-Cter in SUMO)" evidence="2">
    <location>
        <position position="677"/>
    </location>
</feature>
<feature type="cross-link" description="Glycyl lysine isopeptide (Lys-Gly) (interchain with G-Cter in SUMO); alternate" evidence="2">
    <location>
        <position position="751"/>
    </location>
</feature>
<feature type="cross-link" description="Glycyl lysine isopeptide (Lys-Gly) (interchain with G-Cter in SUMO1); alternate" evidence="2">
    <location>
        <position position="751"/>
    </location>
</feature>
<feature type="cross-link" description="Glycyl lysine isopeptide (Lys-Gly) (interchain with G-Cter in SUMO2); alternate" evidence="2">
    <location>
        <position position="751"/>
    </location>
</feature>
<feature type="cross-link" description="Glycyl lysine isopeptide (Lys-Gly) (interchain with G-Cter in SUMO2); alternate" evidence="2">
    <location>
        <position position="771"/>
    </location>
</feature>
<feature type="cross-link" description="Glycyl lysine isopeptide (Lys-Gly) (interchain with G-Cter in SUMO2); alternate" evidence="2">
    <location>
        <position position="775"/>
    </location>
</feature>
<feature type="cross-link" description="Glycyl lysine isopeptide (Lys-Gly) (interchain with G-Cter in SUMO1); alternate" evidence="2">
    <location>
        <position position="780"/>
    </location>
</feature>
<feature type="cross-link" description="Glycyl lysine isopeptide (Lys-Gly) (interchain with G-Cter in SUMO2); alternate" evidence="2">
    <location>
        <position position="780"/>
    </location>
</feature>
<feature type="cross-link" description="Glycyl lysine isopeptide (Lys-Gly) (interchain with G-Cter in SUMO2)" evidence="2">
    <location>
        <position position="805"/>
    </location>
</feature>
<feature type="sequence conflict" description="In Ref. 2; AAB51518." evidence="10" ref="2">
    <original>V</original>
    <variation>A</variation>
    <location>
        <position position="220"/>
    </location>
</feature>
<feature type="sequence conflict" description="In Ref. 2; AAB51518." evidence="10" ref="2">
    <original>K</original>
    <variation>R</variation>
    <location>
        <position position="263"/>
    </location>
</feature>
<name>TIF1B_RAT</name>